<comment type="function">
    <text evidence="1">Involved in transcription antitermination. Required for transcription of ribosomal RNA (rRNA) genes. Binds specifically to the boxA antiterminator sequence of the ribosomal RNA (rrn) operons.</text>
</comment>
<comment type="similarity">
    <text evidence="1">Belongs to the NusB family.</text>
</comment>
<keyword id="KW-1185">Reference proteome</keyword>
<keyword id="KW-0694">RNA-binding</keyword>
<keyword id="KW-0804">Transcription</keyword>
<keyword id="KW-0889">Transcription antitermination</keyword>
<keyword id="KW-0805">Transcription regulation</keyword>
<reference key="1">
    <citation type="submission" date="2005-10" db="EMBL/GenBank/DDBJ databases">
        <title>Complete sequence of Pelobacter carbinolicus DSM 2380.</title>
        <authorList>
            <person name="Copeland A."/>
            <person name="Lucas S."/>
            <person name="Lapidus A."/>
            <person name="Barry K."/>
            <person name="Detter J.C."/>
            <person name="Glavina T."/>
            <person name="Hammon N."/>
            <person name="Israni S."/>
            <person name="Pitluck S."/>
            <person name="Chertkov O."/>
            <person name="Schmutz J."/>
            <person name="Larimer F."/>
            <person name="Land M."/>
            <person name="Kyrpides N."/>
            <person name="Ivanova N."/>
            <person name="Richardson P."/>
        </authorList>
    </citation>
    <scope>NUCLEOTIDE SEQUENCE [LARGE SCALE GENOMIC DNA]</scope>
    <source>
        <strain>DSM 2380 / NBRC 103641 / GraBd1</strain>
    </source>
</reference>
<name>NUSB_SYNC1</name>
<gene>
    <name evidence="1" type="primary">nusB</name>
    <name type="ordered locus">Pcar_1449</name>
</gene>
<accession>Q3A4L2</accession>
<dbReference type="EMBL" id="CP000142">
    <property type="protein sequence ID" value="ABA88695.1"/>
    <property type="molecule type" value="Genomic_DNA"/>
</dbReference>
<dbReference type="RefSeq" id="WP_011341178.1">
    <property type="nucleotide sequence ID" value="NC_007498.2"/>
</dbReference>
<dbReference type="SMR" id="Q3A4L2"/>
<dbReference type="STRING" id="338963.Pcar_1449"/>
<dbReference type="KEGG" id="pca:Pcar_1449"/>
<dbReference type="eggNOG" id="COG0781">
    <property type="taxonomic scope" value="Bacteria"/>
</dbReference>
<dbReference type="HOGENOM" id="CLU_087843_3_3_7"/>
<dbReference type="OrthoDB" id="9797817at2"/>
<dbReference type="Proteomes" id="UP000002534">
    <property type="component" value="Chromosome"/>
</dbReference>
<dbReference type="GO" id="GO:0005829">
    <property type="term" value="C:cytosol"/>
    <property type="evidence" value="ECO:0007669"/>
    <property type="project" value="TreeGrafter"/>
</dbReference>
<dbReference type="GO" id="GO:0003723">
    <property type="term" value="F:RNA binding"/>
    <property type="evidence" value="ECO:0007669"/>
    <property type="project" value="UniProtKB-UniRule"/>
</dbReference>
<dbReference type="GO" id="GO:0006353">
    <property type="term" value="P:DNA-templated transcription termination"/>
    <property type="evidence" value="ECO:0007669"/>
    <property type="project" value="UniProtKB-UniRule"/>
</dbReference>
<dbReference type="GO" id="GO:0031564">
    <property type="term" value="P:transcription antitermination"/>
    <property type="evidence" value="ECO:0007669"/>
    <property type="project" value="UniProtKB-KW"/>
</dbReference>
<dbReference type="CDD" id="cd00619">
    <property type="entry name" value="Terminator_NusB"/>
    <property type="match status" value="1"/>
</dbReference>
<dbReference type="Gene3D" id="1.10.940.10">
    <property type="entry name" value="NusB-like"/>
    <property type="match status" value="1"/>
</dbReference>
<dbReference type="HAMAP" id="MF_00073">
    <property type="entry name" value="NusB"/>
    <property type="match status" value="1"/>
</dbReference>
<dbReference type="InterPro" id="IPR035926">
    <property type="entry name" value="NusB-like_sf"/>
</dbReference>
<dbReference type="InterPro" id="IPR011605">
    <property type="entry name" value="NusB_fam"/>
</dbReference>
<dbReference type="InterPro" id="IPR006027">
    <property type="entry name" value="NusB_RsmB_TIM44"/>
</dbReference>
<dbReference type="NCBIfam" id="TIGR01951">
    <property type="entry name" value="nusB"/>
    <property type="match status" value="1"/>
</dbReference>
<dbReference type="PANTHER" id="PTHR11078:SF3">
    <property type="entry name" value="ANTITERMINATION NUSB DOMAIN-CONTAINING PROTEIN"/>
    <property type="match status" value="1"/>
</dbReference>
<dbReference type="PANTHER" id="PTHR11078">
    <property type="entry name" value="N UTILIZATION SUBSTANCE PROTEIN B-RELATED"/>
    <property type="match status" value="1"/>
</dbReference>
<dbReference type="Pfam" id="PF01029">
    <property type="entry name" value="NusB"/>
    <property type="match status" value="1"/>
</dbReference>
<dbReference type="SUPFAM" id="SSF48013">
    <property type="entry name" value="NusB-like"/>
    <property type="match status" value="1"/>
</dbReference>
<feature type="chain" id="PRO_0000265556" description="Transcription antitermination protein NusB">
    <location>
        <begin position="1"/>
        <end position="156"/>
    </location>
</feature>
<sequence>MASGMRRTGRELAIKIIYSFDGTGSVEALLATFWSNFRFRDDVLGEPLEDSSQAVAEPVREFAEDLVRGVAENLEKIDGLIGEFSTNWSLERMARVDLAILRMATYELLGHLDVPVSVIINEAVEIGKRYGTKETPSFVNGILDRISRTCRPVVAS</sequence>
<evidence type="ECO:0000255" key="1">
    <source>
        <dbReference type="HAMAP-Rule" id="MF_00073"/>
    </source>
</evidence>
<proteinExistence type="inferred from homology"/>
<protein>
    <recommendedName>
        <fullName evidence="1">Transcription antitermination protein NusB</fullName>
    </recommendedName>
    <alternativeName>
        <fullName evidence="1">Antitermination factor NusB</fullName>
    </alternativeName>
</protein>
<organism>
    <name type="scientific">Syntrophotalea carbinolica (strain DSM 2380 / NBRC 103641 / GraBd1)</name>
    <name type="common">Pelobacter carbinolicus</name>
    <dbReference type="NCBI Taxonomy" id="338963"/>
    <lineage>
        <taxon>Bacteria</taxon>
        <taxon>Pseudomonadati</taxon>
        <taxon>Thermodesulfobacteriota</taxon>
        <taxon>Desulfuromonadia</taxon>
        <taxon>Desulfuromonadales</taxon>
        <taxon>Syntrophotaleaceae</taxon>
        <taxon>Syntrophotalea</taxon>
    </lineage>
</organism>